<dbReference type="EMBL" id="S78569">
    <property type="protein sequence ID" value="AAB34635.1"/>
    <property type="molecule type" value="mRNA"/>
</dbReference>
<dbReference type="EMBL" id="X91171">
    <property type="protein sequence ID" value="CAA62596.1"/>
    <property type="molecule type" value="mRNA"/>
</dbReference>
<dbReference type="EMBL" id="X70904">
    <property type="protein sequence ID" value="CAA50261.1"/>
    <property type="molecule type" value="mRNA"/>
</dbReference>
<dbReference type="EMBL" id="AB210027">
    <property type="protein sequence ID" value="BAE06109.1"/>
    <property type="status" value="ALT_INIT"/>
    <property type="molecule type" value="mRNA"/>
</dbReference>
<dbReference type="EMBL" id="BT006690">
    <property type="protein sequence ID" value="AAP35336.1"/>
    <property type="molecule type" value="mRNA"/>
</dbReference>
<dbReference type="EMBL" id="AL590106">
    <property type="status" value="NOT_ANNOTATED_CDS"/>
    <property type="molecule type" value="Genomic_DNA"/>
</dbReference>
<dbReference type="EMBL" id="KF510935">
    <property type="status" value="NOT_ANNOTATED_CDS"/>
    <property type="molecule type" value="Genomic_DNA"/>
</dbReference>
<dbReference type="EMBL" id="Z99289">
    <property type="status" value="NOT_ANNOTATED_CDS"/>
    <property type="molecule type" value="Genomic_DNA"/>
</dbReference>
<dbReference type="EMBL" id="BC004241">
    <property type="protein sequence ID" value="AAH04241.1"/>
    <property type="molecule type" value="mRNA"/>
</dbReference>
<dbReference type="EMBL" id="Y14240">
    <property type="protein sequence ID" value="CAA74636.1"/>
    <property type="molecule type" value="Genomic_DNA"/>
</dbReference>
<dbReference type="EMBL" id="X76939">
    <property type="protein sequence ID" value="CAA54258.1"/>
    <property type="molecule type" value="mRNA"/>
</dbReference>
<dbReference type="CCDS" id="CCDS34514.1">
    <molecule id="Q16363-2"/>
</dbReference>
<dbReference type="CCDS" id="CCDS43491.1">
    <molecule id="Q16363-1"/>
</dbReference>
<dbReference type="CCDS" id="CCDS43492.1">
    <molecule id="Q16363-3"/>
</dbReference>
<dbReference type="PIR" id="S68960">
    <property type="entry name" value="S68960"/>
</dbReference>
<dbReference type="RefSeq" id="NP_001098676.2">
    <molecule id="Q16363-1"/>
    <property type="nucleotide sequence ID" value="NM_001105206.3"/>
</dbReference>
<dbReference type="RefSeq" id="NP_001098677.2">
    <molecule id="Q16363-2"/>
    <property type="nucleotide sequence ID" value="NM_001105207.3"/>
</dbReference>
<dbReference type="RefSeq" id="NP_001098678.1">
    <molecule id="Q16363-3"/>
    <property type="nucleotide sequence ID" value="NM_001105208.3"/>
</dbReference>
<dbReference type="RefSeq" id="NP_001098679.1">
    <molecule id="Q16363-3"/>
    <property type="nucleotide sequence ID" value="NM_001105209.3"/>
</dbReference>
<dbReference type="RefSeq" id="NP_002281.3">
    <molecule id="Q16363-2"/>
    <property type="nucleotide sequence ID" value="NM_002290.5"/>
</dbReference>
<dbReference type="RefSeq" id="XP_005267040.2">
    <molecule id="Q16363-1"/>
    <property type="nucleotide sequence ID" value="XM_005266983.5"/>
</dbReference>
<dbReference type="RefSeq" id="XP_005267041.2">
    <molecule id="Q16363-1"/>
    <property type="nucleotide sequence ID" value="XM_005266984.5"/>
</dbReference>
<dbReference type="RefSeq" id="XP_016866343.1">
    <molecule id="Q16363-2"/>
    <property type="nucleotide sequence ID" value="XM_017010854.3"/>
</dbReference>
<dbReference type="RefSeq" id="XP_047274725.1">
    <molecule id="Q16363-1"/>
    <property type="nucleotide sequence ID" value="XM_047418769.1"/>
</dbReference>
<dbReference type="RefSeq" id="XP_047274726.1">
    <molecule id="Q16363-2"/>
    <property type="nucleotide sequence ID" value="XM_047418770.1"/>
</dbReference>
<dbReference type="SMR" id="Q16363"/>
<dbReference type="BioGRID" id="110104">
    <property type="interactions" value="37"/>
</dbReference>
<dbReference type="ComplexPortal" id="CPX-1777">
    <property type="entry name" value="Laminin-411 complex"/>
</dbReference>
<dbReference type="ComplexPortal" id="CPX-1778">
    <property type="entry name" value="Laminin-421 complex"/>
</dbReference>
<dbReference type="ComplexPortal" id="CPX-1782">
    <property type="entry name" value="Laminin-423 complex"/>
</dbReference>
<dbReference type="CORUM" id="Q16363"/>
<dbReference type="FunCoup" id="Q16363">
    <property type="interactions" value="774"/>
</dbReference>
<dbReference type="IntAct" id="Q16363">
    <property type="interactions" value="35"/>
</dbReference>
<dbReference type="MINT" id="Q16363"/>
<dbReference type="STRING" id="9606.ENSP00000230538"/>
<dbReference type="ChEMBL" id="CHEMBL2364187"/>
<dbReference type="GlyConnect" id="1440">
    <property type="glycosylation" value="42 N-Linked glycans (10 sites)"/>
</dbReference>
<dbReference type="GlyCosmos" id="Q16363">
    <property type="glycosylation" value="20 sites, 43 glycans"/>
</dbReference>
<dbReference type="GlyGen" id="Q16363">
    <property type="glycosylation" value="22 sites, 151 N-linked glycans (13 sites), 2 O-linked glycans (2 sites)"/>
</dbReference>
<dbReference type="iPTMnet" id="Q16363"/>
<dbReference type="PhosphoSitePlus" id="Q16363"/>
<dbReference type="SwissPalm" id="Q16363"/>
<dbReference type="BioMuta" id="LAMA4"/>
<dbReference type="DMDM" id="292495093"/>
<dbReference type="jPOST" id="Q16363"/>
<dbReference type="MassIVE" id="Q16363"/>
<dbReference type="PaxDb" id="9606-ENSP00000230538"/>
<dbReference type="PeptideAtlas" id="Q16363"/>
<dbReference type="ProteomicsDB" id="60862">
    <molecule id="Q16363-1"/>
</dbReference>
<dbReference type="ProteomicsDB" id="60863">
    <molecule id="Q16363-2"/>
</dbReference>
<dbReference type="ProteomicsDB" id="60864">
    <molecule id="Q16363-3"/>
</dbReference>
<dbReference type="Pumba" id="Q16363"/>
<dbReference type="Antibodypedia" id="2846">
    <property type="antibodies" value="366 antibodies from 29 providers"/>
</dbReference>
<dbReference type="DNASU" id="3910"/>
<dbReference type="Ensembl" id="ENST00000230538.12">
    <molecule id="Q16363-1"/>
    <property type="protein sequence ID" value="ENSP00000230538.7"/>
    <property type="gene ID" value="ENSG00000112769.20"/>
</dbReference>
<dbReference type="Ensembl" id="ENST00000368638.5">
    <molecule id="Q16363-3"/>
    <property type="protein sequence ID" value="ENSP00000357627.4"/>
    <property type="gene ID" value="ENSG00000112769.20"/>
</dbReference>
<dbReference type="Ensembl" id="ENST00000389463.9">
    <molecule id="Q16363-2"/>
    <property type="protein sequence ID" value="ENSP00000374114.4"/>
    <property type="gene ID" value="ENSG00000112769.20"/>
</dbReference>
<dbReference type="Ensembl" id="ENST00000424408.6">
    <molecule id="Q16363-2"/>
    <property type="protein sequence ID" value="ENSP00000416470.2"/>
    <property type="gene ID" value="ENSG00000112769.20"/>
</dbReference>
<dbReference type="Ensembl" id="ENST00000453937.2">
    <molecule id="Q16363-3"/>
    <property type="protein sequence ID" value="ENSP00000398226.2"/>
    <property type="gene ID" value="ENSG00000112769.20"/>
</dbReference>
<dbReference type="Ensembl" id="ENST00000455073.1">
    <molecule id="Q16363-3"/>
    <property type="protein sequence ID" value="ENSP00000408604.1"/>
    <property type="gene ID" value="ENSG00000112769.20"/>
</dbReference>
<dbReference type="Ensembl" id="ENST00000522006.5">
    <molecule id="Q16363-2"/>
    <property type="protein sequence ID" value="ENSP00000429488.1"/>
    <property type="gene ID" value="ENSG00000112769.20"/>
</dbReference>
<dbReference type="GeneID" id="3910"/>
<dbReference type="KEGG" id="hsa:3910"/>
<dbReference type="MANE-Select" id="ENST00000230538.12">
    <property type="protein sequence ID" value="ENSP00000230538.7"/>
    <property type="RefSeq nucleotide sequence ID" value="NM_001105206.3"/>
    <property type="RefSeq protein sequence ID" value="NP_001098676.2"/>
</dbReference>
<dbReference type="UCSC" id="uc010kdz.3">
    <molecule id="Q16363-1"/>
    <property type="organism name" value="human"/>
</dbReference>
<dbReference type="AGR" id="HGNC:6484"/>
<dbReference type="CTD" id="3910"/>
<dbReference type="DisGeNET" id="3910"/>
<dbReference type="GeneCards" id="LAMA4"/>
<dbReference type="HGNC" id="HGNC:6484">
    <property type="gene designation" value="LAMA4"/>
</dbReference>
<dbReference type="HPA" id="ENSG00000112769">
    <property type="expression patterns" value="Low tissue specificity"/>
</dbReference>
<dbReference type="MalaCards" id="LAMA4"/>
<dbReference type="MIM" id="600133">
    <property type="type" value="gene"/>
</dbReference>
<dbReference type="MIM" id="615235">
    <property type="type" value="phenotype"/>
</dbReference>
<dbReference type="neXtProt" id="NX_Q16363"/>
<dbReference type="OpenTargets" id="ENSG00000112769"/>
<dbReference type="Orphanet" id="154">
    <property type="disease" value="Familial isolated dilated cardiomyopathy"/>
</dbReference>
<dbReference type="PharmGKB" id="PA30273"/>
<dbReference type="VEuPathDB" id="HostDB:ENSG00000112769"/>
<dbReference type="eggNOG" id="KOG1836">
    <property type="taxonomic scope" value="Eukaryota"/>
</dbReference>
<dbReference type="GeneTree" id="ENSGT00940000159970"/>
<dbReference type="HOGENOM" id="CLU_2095989_0_0_1"/>
<dbReference type="InParanoid" id="Q16363"/>
<dbReference type="OMA" id="CLGEPPM"/>
<dbReference type="OrthoDB" id="5836593at2759"/>
<dbReference type="PAN-GO" id="Q16363">
    <property type="GO annotations" value="0 GO annotations based on evolutionary models"/>
</dbReference>
<dbReference type="PhylomeDB" id="Q16363"/>
<dbReference type="TreeFam" id="TF335359"/>
<dbReference type="PathwayCommons" id="Q16363"/>
<dbReference type="Reactome" id="R-HSA-3000157">
    <property type="pathway name" value="Laminin interactions"/>
</dbReference>
<dbReference type="Reactome" id="R-HSA-3000171">
    <property type="pathway name" value="Non-integrin membrane-ECM interactions"/>
</dbReference>
<dbReference type="Reactome" id="R-HSA-3000178">
    <property type="pathway name" value="ECM proteoglycans"/>
</dbReference>
<dbReference type="Reactome" id="R-HSA-8874081">
    <property type="pathway name" value="MET activates PTK2 signaling"/>
</dbReference>
<dbReference type="Reactome" id="R-HSA-9913351">
    <property type="pathway name" value="Formation of the dystrophin-glycoprotein complex (DGC)"/>
</dbReference>
<dbReference type="SignaLink" id="Q16363"/>
<dbReference type="SIGNOR" id="Q16363"/>
<dbReference type="BioGRID-ORCS" id="3910">
    <property type="hits" value="12 hits in 1156 CRISPR screens"/>
</dbReference>
<dbReference type="ChiTaRS" id="LAMA4">
    <property type="organism name" value="human"/>
</dbReference>
<dbReference type="GeneWiki" id="Laminin,_alpha_4"/>
<dbReference type="GenomeRNAi" id="3910"/>
<dbReference type="Pharos" id="Q16363">
    <property type="development level" value="Tbio"/>
</dbReference>
<dbReference type="PRO" id="PR:Q16363"/>
<dbReference type="Proteomes" id="UP000005640">
    <property type="component" value="Chromosome 6"/>
</dbReference>
<dbReference type="RNAct" id="Q16363">
    <property type="molecule type" value="protein"/>
</dbReference>
<dbReference type="Bgee" id="ENSG00000112769">
    <property type="expression patterns" value="Expressed in lower esophagus muscularis layer and 183 other cell types or tissues"/>
</dbReference>
<dbReference type="ExpressionAtlas" id="Q16363">
    <property type="expression patterns" value="baseline and differential"/>
</dbReference>
<dbReference type="GO" id="GO:0005604">
    <property type="term" value="C:basement membrane"/>
    <property type="evidence" value="ECO:0000314"/>
    <property type="project" value="UniProtKB"/>
</dbReference>
<dbReference type="GO" id="GO:0062023">
    <property type="term" value="C:collagen-containing extracellular matrix"/>
    <property type="evidence" value="ECO:0007005"/>
    <property type="project" value="BHF-UCL"/>
</dbReference>
<dbReference type="GO" id="GO:0070062">
    <property type="term" value="C:extracellular exosome"/>
    <property type="evidence" value="ECO:0007005"/>
    <property type="project" value="UniProtKB"/>
</dbReference>
<dbReference type="GO" id="GO:0005576">
    <property type="term" value="C:extracellular region"/>
    <property type="evidence" value="ECO:0000304"/>
    <property type="project" value="Reactome"/>
</dbReference>
<dbReference type="GO" id="GO:0005201">
    <property type="term" value="F:extracellular matrix structural constituent"/>
    <property type="evidence" value="ECO:0000250"/>
    <property type="project" value="BHF-UCL"/>
</dbReference>
<dbReference type="GO" id="GO:0005102">
    <property type="term" value="F:signaling receptor binding"/>
    <property type="evidence" value="ECO:0007669"/>
    <property type="project" value="InterPro"/>
</dbReference>
<dbReference type="GO" id="GO:0007155">
    <property type="term" value="P:cell adhesion"/>
    <property type="evidence" value="ECO:0007669"/>
    <property type="project" value="UniProtKB-KW"/>
</dbReference>
<dbReference type="GO" id="GO:0120163">
    <property type="term" value="P:negative regulation of cold-induced thermogenesis"/>
    <property type="evidence" value="ECO:0000250"/>
    <property type="project" value="YuBioLab"/>
</dbReference>
<dbReference type="GO" id="GO:0030155">
    <property type="term" value="P:regulation of cell adhesion"/>
    <property type="evidence" value="ECO:0007669"/>
    <property type="project" value="InterPro"/>
</dbReference>
<dbReference type="GO" id="GO:0030334">
    <property type="term" value="P:regulation of cell migration"/>
    <property type="evidence" value="ECO:0007669"/>
    <property type="project" value="InterPro"/>
</dbReference>
<dbReference type="GO" id="GO:0045995">
    <property type="term" value="P:regulation of embryonic development"/>
    <property type="evidence" value="ECO:0007669"/>
    <property type="project" value="InterPro"/>
</dbReference>
<dbReference type="CDD" id="cd00055">
    <property type="entry name" value="EGF_Lam"/>
    <property type="match status" value="3"/>
</dbReference>
<dbReference type="CDD" id="cd00110">
    <property type="entry name" value="LamG"/>
    <property type="match status" value="5"/>
</dbReference>
<dbReference type="FunFam" id="2.10.25.10:FF:000051">
    <property type="entry name" value="Laminin subunit alpha 4"/>
    <property type="match status" value="1"/>
</dbReference>
<dbReference type="FunFam" id="2.10.25.10:FF:000491">
    <property type="entry name" value="Laminin subunit alpha 4"/>
    <property type="match status" value="1"/>
</dbReference>
<dbReference type="FunFam" id="2.10.25.10:FF:000569">
    <property type="entry name" value="Laminin subunit alpha 4"/>
    <property type="match status" value="1"/>
</dbReference>
<dbReference type="FunFam" id="2.60.120.200:FF:000053">
    <property type="entry name" value="Laminin subunit alpha 4"/>
    <property type="match status" value="1"/>
</dbReference>
<dbReference type="FunFam" id="2.60.120.200:FF:000058">
    <property type="entry name" value="Laminin subunit alpha 4"/>
    <property type="match status" value="1"/>
</dbReference>
<dbReference type="FunFam" id="2.60.120.200:FF:000064">
    <property type="entry name" value="Laminin subunit alpha 4"/>
    <property type="match status" value="1"/>
</dbReference>
<dbReference type="FunFam" id="2.60.120.200:FF:000066">
    <property type="entry name" value="Laminin subunit alpha 4"/>
    <property type="match status" value="1"/>
</dbReference>
<dbReference type="FunFam" id="2.60.120.200:FF:000087">
    <property type="entry name" value="Laminin subunit alpha 4"/>
    <property type="match status" value="1"/>
</dbReference>
<dbReference type="Gene3D" id="2.60.120.200">
    <property type="match status" value="5"/>
</dbReference>
<dbReference type="Gene3D" id="2.10.25.10">
    <property type="entry name" value="Laminin"/>
    <property type="match status" value="3"/>
</dbReference>
<dbReference type="InterPro" id="IPR013320">
    <property type="entry name" value="ConA-like_dom_sf"/>
</dbReference>
<dbReference type="InterPro" id="IPR000742">
    <property type="entry name" value="EGF-like_dom"/>
</dbReference>
<dbReference type="InterPro" id="IPR009254">
    <property type="entry name" value="Laminin_aI"/>
</dbReference>
<dbReference type="InterPro" id="IPR010307">
    <property type="entry name" value="Laminin_dom_II"/>
</dbReference>
<dbReference type="InterPro" id="IPR001791">
    <property type="entry name" value="Laminin_G"/>
</dbReference>
<dbReference type="InterPro" id="IPR002049">
    <property type="entry name" value="LE_dom"/>
</dbReference>
<dbReference type="InterPro" id="IPR056863">
    <property type="entry name" value="LMN_ATRN_NET-like_EGF"/>
</dbReference>
<dbReference type="InterPro" id="IPR050372">
    <property type="entry name" value="Neurexin-related_CASP"/>
</dbReference>
<dbReference type="PANTHER" id="PTHR15036:SF47">
    <property type="entry name" value="LAMININ SUBUNIT ALPHA-4"/>
    <property type="match status" value="1"/>
</dbReference>
<dbReference type="PANTHER" id="PTHR15036">
    <property type="entry name" value="PIKACHURIN-LIKE PROTEIN"/>
    <property type="match status" value="1"/>
</dbReference>
<dbReference type="Pfam" id="PF00053">
    <property type="entry name" value="EGF_laminin"/>
    <property type="match status" value="2"/>
</dbReference>
<dbReference type="Pfam" id="PF24973">
    <property type="entry name" value="EGF_LMN_ATRN"/>
    <property type="match status" value="1"/>
</dbReference>
<dbReference type="Pfam" id="PF02210">
    <property type="entry name" value="Laminin_G_2"/>
    <property type="match status" value="5"/>
</dbReference>
<dbReference type="Pfam" id="PF06008">
    <property type="entry name" value="Laminin_I"/>
    <property type="match status" value="1"/>
</dbReference>
<dbReference type="Pfam" id="PF06009">
    <property type="entry name" value="Laminin_II"/>
    <property type="match status" value="1"/>
</dbReference>
<dbReference type="SMART" id="SM00181">
    <property type="entry name" value="EGF"/>
    <property type="match status" value="3"/>
</dbReference>
<dbReference type="SMART" id="SM00180">
    <property type="entry name" value="EGF_Lam"/>
    <property type="match status" value="3"/>
</dbReference>
<dbReference type="SMART" id="SM00282">
    <property type="entry name" value="LamG"/>
    <property type="match status" value="5"/>
</dbReference>
<dbReference type="SUPFAM" id="SSF49899">
    <property type="entry name" value="Concanavalin A-like lectins/glucanases"/>
    <property type="match status" value="5"/>
</dbReference>
<dbReference type="SUPFAM" id="SSF57196">
    <property type="entry name" value="EGF/Laminin"/>
    <property type="match status" value="3"/>
</dbReference>
<dbReference type="PROSITE" id="PS00022">
    <property type="entry name" value="EGF_1"/>
    <property type="match status" value="1"/>
</dbReference>
<dbReference type="PROSITE" id="PS01248">
    <property type="entry name" value="EGF_LAM_1"/>
    <property type="match status" value="3"/>
</dbReference>
<dbReference type="PROSITE" id="PS50027">
    <property type="entry name" value="EGF_LAM_2"/>
    <property type="match status" value="3"/>
</dbReference>
<dbReference type="PROSITE" id="PS50025">
    <property type="entry name" value="LAM_G_DOMAIN"/>
    <property type="match status" value="5"/>
</dbReference>
<organism>
    <name type="scientific">Homo sapiens</name>
    <name type="common">Human</name>
    <dbReference type="NCBI Taxonomy" id="9606"/>
    <lineage>
        <taxon>Eukaryota</taxon>
        <taxon>Metazoa</taxon>
        <taxon>Chordata</taxon>
        <taxon>Craniata</taxon>
        <taxon>Vertebrata</taxon>
        <taxon>Euteleostomi</taxon>
        <taxon>Mammalia</taxon>
        <taxon>Eutheria</taxon>
        <taxon>Euarchontoglires</taxon>
        <taxon>Primates</taxon>
        <taxon>Haplorrhini</taxon>
        <taxon>Catarrhini</taxon>
        <taxon>Hominidae</taxon>
        <taxon>Homo</taxon>
    </lineage>
</organism>
<accession>Q16363</accession>
<accession>A0A0A0MQS9</accession>
<accession>Q14731</accession>
<accession>Q14735</accession>
<accession>Q15335</accession>
<accession>Q4LE44</accession>
<accession>Q5SZG8</accession>
<accession>Q9BTB8</accession>
<accession>Q9UE18</accession>
<accession>Q9UJN9</accession>
<reference key="1">
    <citation type="journal article" date="1995" name="FEBS Lett.">
        <title>Primary structure and expression of a novel human laminin alpha 4 chain.</title>
        <authorList>
            <person name="Iivanainen A."/>
            <person name="Sainio K."/>
            <person name="Sariola H."/>
            <person name="Tryggvason K."/>
        </authorList>
    </citation>
    <scope>NUCLEOTIDE SEQUENCE [MRNA] (ISOFORM 2)</scope>
    <scope>VARIANTS SER-1117 AND ARG-1119</scope>
    <source>
        <tissue>Fetal lung</tissue>
    </source>
</reference>
<reference key="2">
    <citation type="journal article" date="1996" name="Eur. J. Biochem.">
        <title>The complete cDNA sequence of laminin alpha 4 and its relationship to the other human laminin alpha chains.</title>
        <authorList>
            <person name="Richards A.J."/>
            <person name="Al-Imara L."/>
            <person name="Pope F.M."/>
        </authorList>
    </citation>
    <scope>NUCLEOTIDE SEQUENCE [MRNA] (ISOFORM 2)</scope>
    <scope>VARIANTS HIS-498; SER-1117; ARG-1119 AND SER-1549</scope>
</reference>
<reference key="3">
    <citation type="submission" date="2005-03" db="EMBL/GenBank/DDBJ databases">
        <title>Preparation of a set of expression-ready clones of mammalian long cDNAs encoding large proteins by the ORF trap cloning method.</title>
        <authorList>
            <person name="Nakajima D."/>
            <person name="Saito K."/>
            <person name="Yamakawa H."/>
            <person name="Kikuno R.F."/>
            <person name="Nakayama M."/>
            <person name="Ohara R."/>
            <person name="Okazaki N."/>
            <person name="Koga H."/>
            <person name="Nagase T."/>
            <person name="Ohara O."/>
        </authorList>
    </citation>
    <scope>NUCLEOTIDE SEQUENCE [LARGE SCALE MRNA] (ISOFORM 1)</scope>
    <source>
        <tissue>Brain</tissue>
    </source>
</reference>
<reference key="4">
    <citation type="submission" date="2003-05" db="EMBL/GenBank/DDBJ databases">
        <title>Cloning of human full-length CDSs in BD Creator(TM) system donor vector.</title>
        <authorList>
            <person name="Kalnine N."/>
            <person name="Chen X."/>
            <person name="Rolfs A."/>
            <person name="Halleck A."/>
            <person name="Hines L."/>
            <person name="Eisenstein S."/>
            <person name="Koundinya M."/>
            <person name="Raphael J."/>
            <person name="Moreira D."/>
            <person name="Kelley T."/>
            <person name="LaBaer J."/>
            <person name="Lin Y."/>
            <person name="Phelan M."/>
            <person name="Farmer A."/>
        </authorList>
    </citation>
    <scope>NUCLEOTIDE SEQUENCE [LARGE SCALE MRNA] (ISOFORM 3)</scope>
</reference>
<reference key="5">
    <citation type="journal article" date="2003" name="Nature">
        <title>The DNA sequence and analysis of human chromosome 6.</title>
        <authorList>
            <person name="Mungall A.J."/>
            <person name="Palmer S.A."/>
            <person name="Sims S.K."/>
            <person name="Edwards C.A."/>
            <person name="Ashurst J.L."/>
            <person name="Wilming L."/>
            <person name="Jones M.C."/>
            <person name="Horton R."/>
            <person name="Hunt S.E."/>
            <person name="Scott C.E."/>
            <person name="Gilbert J.G.R."/>
            <person name="Clamp M.E."/>
            <person name="Bethel G."/>
            <person name="Milne S."/>
            <person name="Ainscough R."/>
            <person name="Almeida J.P."/>
            <person name="Ambrose K.D."/>
            <person name="Andrews T.D."/>
            <person name="Ashwell R.I.S."/>
            <person name="Babbage A.K."/>
            <person name="Bagguley C.L."/>
            <person name="Bailey J."/>
            <person name="Banerjee R."/>
            <person name="Barker D.J."/>
            <person name="Barlow K.F."/>
            <person name="Bates K."/>
            <person name="Beare D.M."/>
            <person name="Beasley H."/>
            <person name="Beasley O."/>
            <person name="Bird C.P."/>
            <person name="Blakey S.E."/>
            <person name="Bray-Allen S."/>
            <person name="Brook J."/>
            <person name="Brown A.J."/>
            <person name="Brown J.Y."/>
            <person name="Burford D.C."/>
            <person name="Burrill W."/>
            <person name="Burton J."/>
            <person name="Carder C."/>
            <person name="Carter N.P."/>
            <person name="Chapman J.C."/>
            <person name="Clark S.Y."/>
            <person name="Clark G."/>
            <person name="Clee C.M."/>
            <person name="Clegg S."/>
            <person name="Cobley V."/>
            <person name="Collier R.E."/>
            <person name="Collins J.E."/>
            <person name="Colman L.K."/>
            <person name="Corby N.R."/>
            <person name="Coville G.J."/>
            <person name="Culley K.M."/>
            <person name="Dhami P."/>
            <person name="Davies J."/>
            <person name="Dunn M."/>
            <person name="Earthrowl M.E."/>
            <person name="Ellington A.E."/>
            <person name="Evans K.A."/>
            <person name="Faulkner L."/>
            <person name="Francis M.D."/>
            <person name="Frankish A."/>
            <person name="Frankland J."/>
            <person name="French L."/>
            <person name="Garner P."/>
            <person name="Garnett J."/>
            <person name="Ghori M.J."/>
            <person name="Gilby L.M."/>
            <person name="Gillson C.J."/>
            <person name="Glithero R.J."/>
            <person name="Grafham D.V."/>
            <person name="Grant M."/>
            <person name="Gribble S."/>
            <person name="Griffiths C."/>
            <person name="Griffiths M.N.D."/>
            <person name="Hall R."/>
            <person name="Halls K.S."/>
            <person name="Hammond S."/>
            <person name="Harley J.L."/>
            <person name="Hart E.A."/>
            <person name="Heath P.D."/>
            <person name="Heathcott R."/>
            <person name="Holmes S.J."/>
            <person name="Howden P.J."/>
            <person name="Howe K.L."/>
            <person name="Howell G.R."/>
            <person name="Huckle E."/>
            <person name="Humphray S.J."/>
            <person name="Humphries M.D."/>
            <person name="Hunt A.R."/>
            <person name="Johnson C.M."/>
            <person name="Joy A.A."/>
            <person name="Kay M."/>
            <person name="Keenan S.J."/>
            <person name="Kimberley A.M."/>
            <person name="King A."/>
            <person name="Laird G.K."/>
            <person name="Langford C."/>
            <person name="Lawlor S."/>
            <person name="Leongamornlert D.A."/>
            <person name="Leversha M."/>
            <person name="Lloyd C.R."/>
            <person name="Lloyd D.M."/>
            <person name="Loveland J.E."/>
            <person name="Lovell J."/>
            <person name="Martin S."/>
            <person name="Mashreghi-Mohammadi M."/>
            <person name="Maslen G.L."/>
            <person name="Matthews L."/>
            <person name="McCann O.T."/>
            <person name="McLaren S.J."/>
            <person name="McLay K."/>
            <person name="McMurray A."/>
            <person name="Moore M.J.F."/>
            <person name="Mullikin J.C."/>
            <person name="Niblett D."/>
            <person name="Nickerson T."/>
            <person name="Novik K.L."/>
            <person name="Oliver K."/>
            <person name="Overton-Larty E.K."/>
            <person name="Parker A."/>
            <person name="Patel R."/>
            <person name="Pearce A.V."/>
            <person name="Peck A.I."/>
            <person name="Phillimore B.J.C.T."/>
            <person name="Phillips S."/>
            <person name="Plumb R.W."/>
            <person name="Porter K.M."/>
            <person name="Ramsey Y."/>
            <person name="Ranby S.A."/>
            <person name="Rice C.M."/>
            <person name="Ross M.T."/>
            <person name="Searle S.M."/>
            <person name="Sehra H.K."/>
            <person name="Sheridan E."/>
            <person name="Skuce C.D."/>
            <person name="Smith S."/>
            <person name="Smith M."/>
            <person name="Spraggon L."/>
            <person name="Squares S.L."/>
            <person name="Steward C.A."/>
            <person name="Sycamore N."/>
            <person name="Tamlyn-Hall G."/>
            <person name="Tester J."/>
            <person name="Theaker A.J."/>
            <person name="Thomas D.W."/>
            <person name="Thorpe A."/>
            <person name="Tracey A."/>
            <person name="Tromans A."/>
            <person name="Tubby B."/>
            <person name="Wall M."/>
            <person name="Wallis J.M."/>
            <person name="West A.P."/>
            <person name="White S.S."/>
            <person name="Whitehead S.L."/>
            <person name="Whittaker H."/>
            <person name="Wild A."/>
            <person name="Willey D.J."/>
            <person name="Wilmer T.E."/>
            <person name="Wood J.M."/>
            <person name="Wray P.W."/>
            <person name="Wyatt J.C."/>
            <person name="Young L."/>
            <person name="Younger R.M."/>
            <person name="Bentley D.R."/>
            <person name="Coulson A."/>
            <person name="Durbin R.M."/>
            <person name="Hubbard T."/>
            <person name="Sulston J.E."/>
            <person name="Dunham I."/>
            <person name="Rogers J."/>
            <person name="Beck S."/>
        </authorList>
    </citation>
    <scope>NUCLEOTIDE SEQUENCE [LARGE SCALE GENOMIC DNA]</scope>
</reference>
<reference key="6">
    <citation type="journal article" date="2004" name="Genome Res.">
        <title>The status, quality, and expansion of the NIH full-length cDNA project: the Mammalian Gene Collection (MGC).</title>
        <authorList>
            <consortium name="The MGC Project Team"/>
        </authorList>
    </citation>
    <scope>NUCLEOTIDE SEQUENCE [LARGE SCALE MRNA] (ISOFORM 3)</scope>
    <source>
        <tissue>Pancreas</tissue>
    </source>
</reference>
<reference key="7">
    <citation type="journal article" date="1997" name="Eur. J. Biochem.">
        <title>The structural organisation of LAMA4, the gene encoding laminin alpha4.</title>
        <authorList>
            <person name="Richards A.J."/>
            <person name="Luccarini C."/>
            <person name="Pope F.M."/>
        </authorList>
    </citation>
    <scope>NUCLEOTIDE SEQUENCE [GENOMIC DNA] OF 1-24</scope>
    <source>
        <tissue>Heart</tissue>
    </source>
</reference>
<reference key="8">
    <citation type="journal article" date="1994" name="Genomics">
        <title>Localization of the gene (LAMA4) to chromosome 6q21 and isolation of a partial cDNA encoding a variant laminin A chain.</title>
        <authorList>
            <person name="Richards A.J."/>
            <person name="Al-Imara L."/>
            <person name="Carter N.P."/>
            <person name="Lloyd J.C."/>
            <person name="Leversha M.A."/>
            <person name="Pope F.M."/>
        </authorList>
    </citation>
    <scope>NUCLEOTIDE SEQUENCE [MRNA] OF 236-1823 (ISOFORM 2)</scope>
    <scope>VARIANTS HIS-498; SER-1117 AND ARG-1119</scope>
    <source>
        <tissue>Heart</tissue>
    </source>
</reference>
<reference key="9">
    <citation type="journal article" date="2009" name="J. Proteome Res.">
        <title>Glycoproteomics analysis of human liver tissue by combination of multiple enzyme digestion and hydrazide chemistry.</title>
        <authorList>
            <person name="Chen R."/>
            <person name="Jiang X."/>
            <person name="Sun D."/>
            <person name="Han G."/>
            <person name="Wang F."/>
            <person name="Ye M."/>
            <person name="Wang L."/>
            <person name="Zou H."/>
        </authorList>
    </citation>
    <scope>GLYCOSYLATION [LARGE SCALE ANALYSIS] AT ASN-557; ASN-578; ASN-581; ASN-742; ASN-787 AND ASN-810</scope>
    <source>
        <tissue>Liver</tissue>
    </source>
</reference>
<reference key="10">
    <citation type="journal article" date="2015" name="Mol. Cell. Proteomics">
        <title>Identification of chondroitin sulfate linkage region glycopeptides reveals prohormones as a novel class of proteoglycans.</title>
        <authorList>
            <person name="Noborn F."/>
            <person name="Gomez Toledo A."/>
            <person name="Sihlbom C."/>
            <person name="Lengqvist J."/>
            <person name="Fries E."/>
            <person name="Kjellen L."/>
            <person name="Nilsson J."/>
            <person name="Larson G."/>
        </authorList>
    </citation>
    <scope>SUBCELLULAR LOCATION</scope>
    <scope>TISSUE SPECIFICITY</scope>
    <scope>GLYCOSYLATION AT SER-39</scope>
</reference>
<reference key="11">
    <citation type="journal article" date="2020" name="Glycobiology">
        <title>An affinity chromatography and glycoproteomics workflow to profile the chondroitin sulfate proteoglycans that interact with malarial VAR2CSA in the placenta and in cancer.</title>
        <authorList>
            <person name="Toledo A.G."/>
            <person name="Pihl J."/>
            <person name="Spliid C.B."/>
            <person name="Persson A."/>
            <person name="Nilsson J."/>
            <person name="Pereira M.A."/>
            <person name="Gustavsson T."/>
            <person name="Choudhary S."/>
            <person name="Oo H.Z."/>
            <person name="Black P.C."/>
            <person name="Daugaard M."/>
            <person name="Esko J.D."/>
            <person name="Larson G."/>
            <person name="Salanti A."/>
            <person name="Clausen T.M."/>
        </authorList>
    </citation>
    <scope>TISSUE SPECIFICITY</scope>
    <scope>GLYCOSYLATION AT SER-39</scope>
</reference>
<reference key="12">
    <citation type="journal article" date="2022" name="J. Proteins Proteom.">
        <title>Mass spectrometric analysis of chondroitin sulfate-linked peptides.</title>
        <authorList>
            <person name="Ramarajan M.G."/>
            <person name="Saraswat M."/>
            <person name="Budhraja R."/>
            <person name="Garapati K."/>
            <person name="Raymond K."/>
            <person name="Pandey A."/>
        </authorList>
    </citation>
    <scope>SUBCELLULAR LOCATION</scope>
    <scope>TISSUE SPECIFICITY</scope>
    <scope>GLYCOSYLATION AT SER-39</scope>
</reference>
<reference key="13">
    <citation type="journal article" date="2023" name="Mol. Cell. Proteomics">
        <title>Mapping the Human Chondroitin Sulfate Glycoproteome Reveals an Unexpected Correlation Between Glycan Sulfation and Attachment Site Characteristics.</title>
        <authorList>
            <person name="Noborn F."/>
            <person name="Nilsson J."/>
            <person name="Sihlbom C."/>
            <person name="Nikpour M."/>
            <person name="Kjellen L."/>
            <person name="Larson G."/>
        </authorList>
    </citation>
    <scope>SUBCELLULAR LOCATION</scope>
    <scope>TISSUE SPECIFICITY</scope>
    <scope>GLYCOSYLATION AT SER-39</scope>
</reference>
<reference key="14">
    <citation type="journal article" date="2007" name="Circulation">
        <title>Laminin-alpha4 and integrin-linked kinase mutations cause human cardiomyopathy via simultaneous defects in cardiomyocytes and endothelial cells.</title>
        <authorList>
            <person name="Knoell R."/>
            <person name="Postel R."/>
            <person name="Wang J."/>
            <person name="Kraetzner R."/>
            <person name="Hennecke G."/>
            <person name="Vacaru A.M."/>
            <person name="Vakeel P."/>
            <person name="Schubert C."/>
            <person name="Murthy K."/>
            <person name="Rana B.K."/>
            <person name="Kube D."/>
            <person name="Knoell G."/>
            <person name="Schaefer K."/>
            <person name="Hayashi T."/>
            <person name="Holm T."/>
            <person name="Kimura A."/>
            <person name="Schork N."/>
            <person name="Toliat M.R."/>
            <person name="Nuernberg P."/>
            <person name="Schultheiss H.P."/>
            <person name="Schaper W."/>
            <person name="Schaper J."/>
            <person name="Bos E."/>
            <person name="Den Hertog J."/>
            <person name="van Eeden F.J."/>
            <person name="Peters P.J."/>
            <person name="Hasenfuss G."/>
            <person name="Chien K.R."/>
            <person name="Bakkers J."/>
        </authorList>
    </citation>
    <scope>VARIANT CMD1JJ LEU-950</scope>
    <scope>CHARACTERIZATION OF VARIANT CMD1JJ LEU-950</scope>
</reference>
<comment type="function">
    <text>Binding to cells via a high affinity receptor, laminin is thought to mediate the attachment, migration and organization of cells into tissues during embryonic development by interacting with other extracellular matrix components.</text>
</comment>
<comment type="subunit">
    <text>Laminin is a complex glycoprotein, consisting of three different polypeptide chains (alpha, beta, gamma), which are bound to each other by disulfide bonds into a cross-shaped molecule comprising one long and three short arms with globules at each end. Alpha-4 is a subunit of laminin-8 (laminin-411), laminin-9 (laminin-421) and laminin-14 (laminin-423).</text>
</comment>
<comment type="interaction">
    <interactant intactId="EBI-17719490">
        <id>Q16363-3</id>
    </interactant>
    <interactant intactId="EBI-77613">
        <id>P05067</id>
        <label>APP</label>
    </interactant>
    <organismsDiffer>false</organismsDiffer>
    <experiments>3</experiments>
</comment>
<comment type="interaction">
    <interactant intactId="EBI-17719490">
        <id>Q16363-3</id>
    </interactant>
    <interactant intactId="EBI-10244780">
        <id>Q5QGT7</id>
        <label>RTP2</label>
    </interactant>
    <organismsDiffer>false</organismsDiffer>
    <experiments>3</experiments>
</comment>
<comment type="subcellular location">
    <subcellularLocation>
        <location>Secreted</location>
        <location>Extracellular space</location>
        <location>Extracellular matrix</location>
        <location>Basement membrane</location>
    </subcellularLocation>
    <subcellularLocation>
        <location evidence="8 10 11">Secreted</location>
    </subcellularLocation>
    <text>Major basement membrane component.</text>
</comment>
<comment type="alternative products">
    <event type="alternative splicing"/>
    <isoform>
        <id>Q16363-1</id>
        <name>1</name>
        <sequence type="displayed"/>
    </isoform>
    <isoform>
        <id>Q16363-2</id>
        <name>2</name>
        <sequence type="described" ref="VSP_017542"/>
    </isoform>
    <isoform>
        <id>Q16363-3</id>
        <name>3</name>
        <sequence type="described" ref="VSP_038853 VSP_038854"/>
    </isoform>
</comment>
<comment type="tissue specificity">
    <text evidence="8 9 10 11">Detected in placenta (at protein level) (PubMed:32337544). Detected in fibroblasts and urine (at protein level) (PubMed:25326458, PubMed:36213313, PubMed:37453717). In adult, strong expression in heart, lung, ovary small and large intestines, placenta, liver; weak or no expression in skeletal muscle, kidney, pancreas, testis, prostate, brain. High expression in fetal lung and kidney. Expression in fetal and newborn tissues is observed in certain mesenchymal cells in tissues such as smooth muscle and dermis.</text>
</comment>
<comment type="domain">
    <text>The alpha-helical domains I and II are thought to interact with other laminin chains to form a coiled coil structure.</text>
</comment>
<comment type="domain">
    <text>Domain G is globular.</text>
</comment>
<comment type="disease" evidence="6">
    <disease id="DI-03729">
        <name>Cardiomyopathy, dilated, 1JJ</name>
        <acronym>CMD1JJ</acronym>
        <description>A disorder characterized by ventricular dilation and impaired systolic function, resulting in congestive heart failure and arrhythmia. Patients are at risk of premature death.</description>
        <dbReference type="MIM" id="615235"/>
    </disease>
    <text>The disease is caused by variants affecting the gene represented in this entry.</text>
</comment>
<comment type="caution">
    <text evidence="20">Gene LAMA4 was formerly called LAMA3.</text>
</comment>
<comment type="sequence caution" evidence="20">
    <conflict type="erroneous initiation">
        <sequence resource="EMBL-CDS" id="BAE06109"/>
    </conflict>
    <text>Extended N-terminus.</text>
</comment>
<evidence type="ECO:0000250" key="1"/>
<evidence type="ECO:0000255" key="2"/>
<evidence type="ECO:0000255" key="3">
    <source>
        <dbReference type="PROSITE-ProRule" id="PRU00122"/>
    </source>
</evidence>
<evidence type="ECO:0000255" key="4">
    <source>
        <dbReference type="PROSITE-ProRule" id="PRU00460"/>
    </source>
</evidence>
<evidence type="ECO:0000256" key="5">
    <source>
        <dbReference type="SAM" id="MobiDB-lite"/>
    </source>
</evidence>
<evidence type="ECO:0000269" key="6">
    <source>
    </source>
</evidence>
<evidence type="ECO:0000269" key="7">
    <source>
    </source>
</evidence>
<evidence type="ECO:0000269" key="8">
    <source>
    </source>
</evidence>
<evidence type="ECO:0000269" key="9">
    <source>
    </source>
</evidence>
<evidence type="ECO:0000269" key="10">
    <source>
    </source>
</evidence>
<evidence type="ECO:0000269" key="11">
    <source>
    </source>
</evidence>
<evidence type="ECO:0000269" key="12">
    <source>
    </source>
</evidence>
<evidence type="ECO:0000269" key="13">
    <source>
    </source>
</evidence>
<evidence type="ECO:0000269" key="14">
    <source>
    </source>
</evidence>
<evidence type="ECO:0000303" key="15">
    <source>
    </source>
</evidence>
<evidence type="ECO:0000303" key="16">
    <source>
    </source>
</evidence>
<evidence type="ECO:0000303" key="17">
    <source>
    </source>
</evidence>
<evidence type="ECO:0000303" key="18">
    <source>
    </source>
</evidence>
<evidence type="ECO:0000303" key="19">
    <source ref="4"/>
</evidence>
<evidence type="ECO:0000305" key="20"/>
<feature type="signal peptide" evidence="2">
    <location>
        <begin position="1"/>
        <end position="24"/>
    </location>
</feature>
<feature type="chain" id="PRO_0000017060" description="Laminin subunit alpha-4">
    <location>
        <begin position="25"/>
        <end position="1823"/>
    </location>
</feature>
<feature type="domain" description="Laminin EGF-like 1" evidence="4">
    <location>
        <begin position="82"/>
        <end position="131"/>
    </location>
</feature>
<feature type="domain" description="Laminin EGF-like 2" evidence="4">
    <location>
        <begin position="132"/>
        <end position="186"/>
    </location>
</feature>
<feature type="domain" description="Laminin EGF-like 3" evidence="4">
    <location>
        <begin position="187"/>
        <end position="240"/>
    </location>
</feature>
<feature type="domain" description="Laminin EGF-like 4; truncated" evidence="4">
    <location>
        <begin position="241"/>
        <end position="255"/>
    </location>
</feature>
<feature type="domain" description="Laminin G-like 1" evidence="3">
    <location>
        <begin position="833"/>
        <end position="1035"/>
    </location>
</feature>
<feature type="domain" description="Laminin G-like 2" evidence="3">
    <location>
        <begin position="1047"/>
        <end position="1227"/>
    </location>
</feature>
<feature type="domain" description="Laminin G-like 3" evidence="3">
    <location>
        <begin position="1234"/>
        <end position="1402"/>
    </location>
</feature>
<feature type="domain" description="Laminin G-like 4" evidence="3">
    <location>
        <begin position="1469"/>
        <end position="1640"/>
    </location>
</feature>
<feature type="domain" description="Laminin G-like 5" evidence="3">
    <location>
        <begin position="1647"/>
        <end position="1820"/>
    </location>
</feature>
<feature type="region of interest" description="Domain II and I">
    <location>
        <begin position="256"/>
        <end position="832"/>
    </location>
</feature>
<feature type="region of interest" description="Disordered" evidence="5">
    <location>
        <begin position="1419"/>
        <end position="1440"/>
    </location>
</feature>
<feature type="coiled-coil region" evidence="2">
    <location>
        <begin position="320"/>
        <end position="403"/>
    </location>
</feature>
<feature type="coiled-coil region" evidence="2">
    <location>
        <begin position="473"/>
        <end position="528"/>
    </location>
</feature>
<feature type="coiled-coil region" evidence="2">
    <location>
        <begin position="581"/>
        <end position="614"/>
    </location>
</feature>
<feature type="coiled-coil region" evidence="2">
    <location>
        <begin position="662"/>
        <end position="724"/>
    </location>
</feature>
<feature type="coiled-coil region" evidence="2">
    <location>
        <begin position="777"/>
        <end position="806"/>
    </location>
</feature>
<feature type="short sequence motif" description="Cell attachment site" evidence="2">
    <location>
        <begin position="724"/>
        <end position="726"/>
    </location>
</feature>
<feature type="glycosylation site" description="O-linked (Xyl...) (chondroitin sulfate) serine" evidence="8 9 10 11">
    <location>
        <position position="39"/>
    </location>
</feature>
<feature type="glycosylation site" description="N-linked (GlcNAc...) asparagine" evidence="2">
    <location>
        <position position="104"/>
    </location>
</feature>
<feature type="glycosylation site" description="N-linked (GlcNAc...) asparagine" evidence="2">
    <location>
        <position position="215"/>
    </location>
</feature>
<feature type="glycosylation site" description="N-linked (GlcNAc...) asparagine" evidence="2">
    <location>
        <position position="315"/>
    </location>
</feature>
<feature type="glycosylation site" description="N-linked (GlcNAc...) asparagine" evidence="2">
    <location>
        <position position="465"/>
    </location>
</feature>
<feature type="glycosylation site" description="N-linked (GlcNAc...) asparagine" evidence="2">
    <location>
        <position position="531"/>
    </location>
</feature>
<feature type="glycosylation site" description="N-linked (GlcNAc...) asparagine" evidence="7">
    <location>
        <position position="557"/>
    </location>
</feature>
<feature type="glycosylation site" description="N-linked (GlcNAc...) asparagine" evidence="7">
    <location>
        <position position="578"/>
    </location>
</feature>
<feature type="glycosylation site" description="N-linked (GlcNAc...) asparagine" evidence="7">
    <location>
        <position position="581"/>
    </location>
</feature>
<feature type="glycosylation site" description="N-linked (GlcNAc...) asparagine" evidence="2">
    <location>
        <position position="638"/>
    </location>
</feature>
<feature type="glycosylation site" description="N-linked (GlcNAc...) asparagine" evidence="2">
    <location>
        <position position="646"/>
    </location>
</feature>
<feature type="glycosylation site" description="N-linked (GlcNAc...) asparagine" evidence="7">
    <location>
        <position position="742"/>
    </location>
</feature>
<feature type="glycosylation site" description="N-linked (GlcNAc...) asparagine" evidence="2">
    <location>
        <position position="758"/>
    </location>
</feature>
<feature type="glycosylation site" description="N-linked (GlcNAc...) asparagine" evidence="2">
    <location>
        <position position="761"/>
    </location>
</feature>
<feature type="glycosylation site" description="N-linked (GlcNAc...) asparagine" evidence="7">
    <location>
        <position position="787"/>
    </location>
</feature>
<feature type="glycosylation site" description="N-linked (GlcNAc...) asparagine" evidence="7">
    <location>
        <position position="810"/>
    </location>
</feature>
<feature type="glycosylation site" description="N-linked (GlcNAc...) asparagine" evidence="2">
    <location>
        <position position="1093"/>
    </location>
</feature>
<feature type="glycosylation site" description="N-linked (GlcNAc...) asparagine" evidence="2">
    <location>
        <position position="1288"/>
    </location>
</feature>
<feature type="glycosylation site" description="N-linked (GlcNAc...) asparagine" evidence="2">
    <location>
        <position position="1366"/>
    </location>
</feature>
<feature type="glycosylation site" description="N-linked (GlcNAc...) asparagine" evidence="2">
    <location>
        <position position="1418"/>
    </location>
</feature>
<feature type="disulfide bond" evidence="1">
    <location>
        <begin position="82"/>
        <end position="91"/>
    </location>
</feature>
<feature type="disulfide bond" evidence="1">
    <location>
        <begin position="84"/>
        <end position="98"/>
    </location>
</feature>
<feature type="disulfide bond" evidence="1">
    <location>
        <begin position="101"/>
        <end position="110"/>
    </location>
</feature>
<feature type="disulfide bond" evidence="1">
    <location>
        <begin position="113"/>
        <end position="129"/>
    </location>
</feature>
<feature type="disulfide bond" evidence="1">
    <location>
        <begin position="132"/>
        <end position="146"/>
    </location>
</feature>
<feature type="disulfide bond" evidence="1">
    <location>
        <begin position="134"/>
        <end position="155"/>
    </location>
</feature>
<feature type="disulfide bond" evidence="1">
    <location>
        <begin position="157"/>
        <end position="166"/>
    </location>
</feature>
<feature type="disulfide bond" evidence="1">
    <location>
        <begin position="169"/>
        <end position="184"/>
    </location>
</feature>
<feature type="disulfide bond" evidence="1">
    <location>
        <begin position="187"/>
        <end position="202"/>
    </location>
</feature>
<feature type="disulfide bond" evidence="1">
    <location>
        <begin position="189"/>
        <end position="209"/>
    </location>
</feature>
<feature type="disulfide bond" evidence="1">
    <location>
        <begin position="212"/>
        <end position="221"/>
    </location>
</feature>
<feature type="disulfide bond" evidence="1">
    <location>
        <begin position="224"/>
        <end position="238"/>
    </location>
</feature>
<feature type="disulfide bond" description="Interchain" evidence="20">
    <location>
        <position position="273"/>
    </location>
</feature>
<feature type="disulfide bond" description="Interchain" evidence="20">
    <location>
        <position position="276"/>
    </location>
</feature>
<feature type="disulfide bond" evidence="1">
    <location>
        <begin position="1005"/>
        <end position="1035"/>
    </location>
</feature>
<feature type="disulfide bond" evidence="1">
    <location>
        <begin position="1201"/>
        <end position="1227"/>
    </location>
</feature>
<feature type="disulfide bond" evidence="1">
    <location>
        <begin position="1370"/>
        <end position="1402"/>
    </location>
</feature>
<feature type="disulfide bond" evidence="1">
    <location>
        <begin position="1617"/>
        <end position="1640"/>
    </location>
</feature>
<feature type="disulfide bond" evidence="1">
    <location>
        <begin position="1792"/>
        <end position="1820"/>
    </location>
</feature>
<feature type="splice variant" id="VSP_038853" description="In isoform 3." evidence="15 19">
    <original>KCNAGFFHTLSGECVPCDCNGNSNECLDGSGYCVHCQRNTTGEHCEKCLDGYIGD</original>
    <variation>VQCPCHCHPAGAPAPPRAVPHSSFSLSPPLSSPQCLESFTWARSVRKLEIKSFPL</variation>
    <location>
        <begin position="66"/>
        <end position="120"/>
    </location>
</feature>
<feature type="splice variant" id="VSP_038854" description="In isoform 3." evidence="15 19">
    <location>
        <begin position="121"/>
        <end position="1823"/>
    </location>
</feature>
<feature type="splice variant" id="VSP_017542" description="In isoform 2." evidence="16 17 18">
    <location>
        <begin position="266"/>
        <end position="272"/>
    </location>
</feature>
<feature type="sequence variant" id="VAR_056140" description="In dbSNP:rs35349917.">
    <original>G</original>
    <variation>S</variation>
    <location>
        <position position="94"/>
    </location>
</feature>
<feature type="sequence variant" id="VAR_056141" description="In dbSNP:rs11757455.">
    <original>R</original>
    <variation>W</variation>
    <location>
        <position position="154"/>
    </location>
</feature>
<feature type="sequence variant" id="VAR_090038" description="In dbSNP:rs9400522.">
    <original>D</original>
    <variation>A</variation>
    <location>
        <position position="283"/>
    </location>
</feature>
<feature type="sequence variant" id="VAR_056142" description="In dbSNP:rs3752579.">
    <original>L</original>
    <variation>H</variation>
    <location>
        <position position="492"/>
    </location>
</feature>
<feature type="sequence variant" id="VAR_025550" description="In dbSNP:rs1050348." evidence="13 14">
    <original>Y</original>
    <variation>H</variation>
    <location>
        <position position="498"/>
    </location>
</feature>
<feature type="sequence variant" id="VAR_069708" description="In CMD1JJ; loss of integrin-binding capacity; dbSNP:rs387907365." evidence="6">
    <original>P</original>
    <variation>L</variation>
    <location>
        <position position="950"/>
    </location>
</feature>
<feature type="sequence variant" id="VAR_025551" description="In dbSNP:rs2032567." evidence="12 13 14">
    <original>G</original>
    <variation>S</variation>
    <location>
        <position position="1117"/>
    </location>
</feature>
<feature type="sequence variant" id="VAR_025552" description="In dbSNP:rs1050349." evidence="12 13 14">
    <original>P</original>
    <variation>R</variation>
    <location>
        <position position="1119"/>
    </location>
</feature>
<feature type="sequence variant" id="VAR_056143" description="In dbSNP:rs12110554." evidence="14">
    <original>N</original>
    <variation>S</variation>
    <location>
        <position position="1549"/>
    </location>
</feature>
<feature type="sequence variant" id="VAR_056144" description="In dbSNP:rs3734292.">
    <original>V</original>
    <variation>I</variation>
    <location>
        <position position="1815"/>
    </location>
</feature>
<feature type="sequence conflict" description="In Ref. 1; AAB34635." evidence="20" ref="1">
    <original>A</original>
    <variation>P</variation>
    <location>
        <position position="143"/>
    </location>
</feature>
<feature type="sequence conflict" description="In Ref. 1; AAB34635." evidence="20" ref="1">
    <original>L</original>
    <variation>F</variation>
    <location>
        <position position="178"/>
    </location>
</feature>
<feature type="sequence conflict" description="In Ref. 1; AAB34635." evidence="20" ref="1">
    <original>T</original>
    <variation>P</variation>
    <location>
        <position position="1064"/>
    </location>
</feature>
<keyword id="KW-0025">Alternative splicing</keyword>
<keyword id="KW-0084">Basement membrane</keyword>
<keyword id="KW-0122">Cardiomyopathy</keyword>
<keyword id="KW-0130">Cell adhesion</keyword>
<keyword id="KW-0175">Coiled coil</keyword>
<keyword id="KW-0225">Disease variant</keyword>
<keyword id="KW-1015">Disulfide bond</keyword>
<keyword id="KW-0272">Extracellular matrix</keyword>
<keyword id="KW-0325">Glycoprotein</keyword>
<keyword id="KW-0424">Laminin EGF-like domain</keyword>
<keyword id="KW-0654">Proteoglycan</keyword>
<keyword id="KW-1267">Proteomics identification</keyword>
<keyword id="KW-1185">Reference proteome</keyword>
<keyword id="KW-0677">Repeat</keyword>
<keyword id="KW-0964">Secreted</keyword>
<keyword id="KW-0732">Signal</keyword>
<protein>
    <recommendedName>
        <fullName>Laminin subunit alpha-4</fullName>
    </recommendedName>
    <alternativeName>
        <fullName>Laminin-14 subunit alpha</fullName>
    </alternativeName>
    <alternativeName>
        <fullName>Laminin-8 subunit alpha</fullName>
    </alternativeName>
    <alternativeName>
        <fullName>Laminin-9 subunit alpha</fullName>
    </alternativeName>
</protein>
<sequence>MALSSAWRSVLPLWLLWSAACSRAASGDDNAFPFDIEGSSAVGRQDPPETSEPRVALGRLPPAAEKCNAGFFHTLSGECVPCDCNGNSNECLDGSGYCVHCQRNTTGEHCEKCLDGYIGDSIRGAPQFCQPCPCPLPHLANFAESCYRKNGAVRCICNENYAGPNCERCAPGYYGNPLLIGSTCKKCDCSGNSDPNLIFEDCDEVTGQCRNCLRNTTGFKCERCAPGYYGDARIAKNCAVCNCGGGPCDSVTGECLEEGFEPPTGMDCPTISCDKCVWDLTDDLRLAALSIEEGKSGVLSVSSGAAAHRHVNEINATIYLLKTKLSERENQYALRKIQINNAENTMKSLLSDVEELVEKENQASRKGQLVQKESMDTINHASQLVEQAHDMRDKIQEINNKMLYYGEEHELSPKEISEKLVLAQKMLEEIRSRQPFFTQRELVDEEADEAYELLSQAESWQRLHNETRTLFPVVLEQLDDYNAKLSDLQEALDQALNYVRDAEDMNRATAARQRDHEKQQERVREQMEVVNMSLSTSADSLTTPRLTLSELDDIIKNASGIYAEIDGAKSELQVKLSNLSNLSHDLVQEAIDHAQDLQQEANELSRKLHSSDMNGLVQKALDASNVYENIVNYVSEANETAEFALNTTDRIYDAVSGIDTQIIYHKDESENLLNQARELQAKAESSSDEAVADTSRRVGGALARKSALKTRLSDAVKQLQAAERGDAQQRLGQSRLITEEANRTTMEVQQATAPMANNLTNWSQNLQHFDSSAYNTAVNSARDAVRNLTEVVPQLLDQLRTVEQKRPASNVSASIQRIRELIAQTRSVASKIQVSMMFDGQSAVEVHSRTSMDDLKAFTSLSLYMKPPVKRPELTETADQFILYLGSKNAKKEYMGLAIKNDNLVYVYNLGTKDVEIPLDSKPVSSWPAYFSIVKIERVGKHGKVFLTVPSLSSTAEEKFIKKGEFSGDDSLLDLDPEDTVFYVGGVPSNFKLPTSLNLPGFVGCLELATLNNDVISLYNFKHIYNMDPSTSVPCARDKLAFTQSRAASYFFDGSGYAVVRDITRRGKFGQVTRFDIEVRTPADNGLILLMVNGSMFFRLEMRNGYLHVFYDFGFSGGPVHLEDTLKKAQINDAKYHEISIIYHNDKKMILVVDRRHVKSMDNEKMKIPFTDIYIGGAPPEILQSRALRAHLPLDINFRGCMKGFQFQKKDFNLLEQTETLGVGYGCPEDSLISRRAYFNGQSFIASIQKISFFDGFEGGFNFRTLQPNGLLFYYASGSDVFSISLDNGTVIMDVKGIKVQSVDKQYNDGLSHFVISSVSPTRYELIVDKSRVGSKNPTKGKIEQTQASEKKFYFGGSPISAQYANFTGCISNAYFTRVDRDVEVEDFQRYTEKVHTSLYECPIESSPLFLLHKKGKNLSKPKASQNKKGGKSKDAPSWDPVALKLPERNTPRNSHCHLSNSPRAIEHAYQYGGTANSRQEFEHLKGDFGAKSQFSIRLRTRSSHGMIFYVSDQEENDFMTLFLAHGRLVYMFNVGHKKLKIRSQEKYNDGLWHDVIFIRERSSGRLVIDGLRVLEESLPPTEATWKIKGPIYLGGVAPGKAVKNVQINSIYSFSGCLSNLQLNGASITSASQTFSVTPCFEGPMETGTYFSTEGGYVVLDESFNIGLKFEIAFEVRPRSSSGTLVHGHSVNGEYLNVHMKNGQVIVKVNNGIRDFSTSVTPKQSLCDGRWHRITVIRDSNVVQLDVDSEVNHVVGPLNPKPIDHREPVFVGGVPESLLTPRLAPSKPFTGCIRHFVIDGHPVSFSKAALVSGAVSINSCPAA</sequence>
<gene>
    <name type="primary">LAMA4</name>
</gene>
<name>LAMA4_HUMAN</name>
<proteinExistence type="evidence at protein level"/>